<protein>
    <recommendedName>
        <fullName evidence="1">Arginine biosynthesis bifunctional protein ArgJ</fullName>
    </recommendedName>
    <domain>
        <recommendedName>
            <fullName evidence="1">Glutamate N-acetyltransferase</fullName>
            <ecNumber evidence="1">2.3.1.35</ecNumber>
        </recommendedName>
        <alternativeName>
            <fullName evidence="1">Ornithine acetyltransferase</fullName>
            <shortName evidence="1">OATase</shortName>
        </alternativeName>
        <alternativeName>
            <fullName evidence="1">Ornithine transacetylase</fullName>
        </alternativeName>
    </domain>
    <domain>
        <recommendedName>
            <fullName evidence="1">Amino-acid acetyltransferase</fullName>
            <ecNumber evidence="1">2.3.1.1</ecNumber>
        </recommendedName>
        <alternativeName>
            <fullName evidence="1">N-acetylglutamate synthase</fullName>
            <shortName evidence="1">AGSase</shortName>
        </alternativeName>
    </domain>
    <component>
        <recommendedName>
            <fullName evidence="1">Arginine biosynthesis bifunctional protein ArgJ alpha chain</fullName>
        </recommendedName>
    </component>
    <component>
        <recommendedName>
            <fullName evidence="1">Arginine biosynthesis bifunctional protein ArgJ beta chain</fullName>
        </recommendedName>
    </component>
</protein>
<evidence type="ECO:0000255" key="1">
    <source>
        <dbReference type="HAMAP-Rule" id="MF_01106"/>
    </source>
</evidence>
<accession>P59610</accession>
<dbReference type="EC" id="2.3.1.35" evidence="1"/>
<dbReference type="EC" id="2.3.1.1" evidence="1"/>
<dbReference type="EMBL" id="BA000040">
    <property type="protein sequence ID" value="BAC45471.1"/>
    <property type="molecule type" value="Genomic_DNA"/>
</dbReference>
<dbReference type="RefSeq" id="NP_766846.1">
    <property type="nucleotide sequence ID" value="NC_004463.1"/>
</dbReference>
<dbReference type="RefSeq" id="WP_011083038.1">
    <property type="nucleotide sequence ID" value="NC_004463.1"/>
</dbReference>
<dbReference type="SMR" id="P59610"/>
<dbReference type="STRING" id="224911.AAV28_40275"/>
<dbReference type="MEROPS" id="T05.001"/>
<dbReference type="EnsemblBacteria" id="BAC45471">
    <property type="protein sequence ID" value="BAC45471"/>
    <property type="gene ID" value="BAC45471"/>
</dbReference>
<dbReference type="GeneID" id="46495358"/>
<dbReference type="KEGG" id="bja:blr0206"/>
<dbReference type="PATRIC" id="fig|224911.44.peg.8726"/>
<dbReference type="eggNOG" id="COG1364">
    <property type="taxonomic scope" value="Bacteria"/>
</dbReference>
<dbReference type="HOGENOM" id="CLU_027172_1_0_5"/>
<dbReference type="InParanoid" id="P59610"/>
<dbReference type="OrthoDB" id="9804242at2"/>
<dbReference type="PhylomeDB" id="P59610"/>
<dbReference type="UniPathway" id="UPA00068">
    <property type="reaction ID" value="UER00106"/>
</dbReference>
<dbReference type="UniPathway" id="UPA00068">
    <property type="reaction ID" value="UER00111"/>
</dbReference>
<dbReference type="Proteomes" id="UP000002526">
    <property type="component" value="Chromosome"/>
</dbReference>
<dbReference type="GO" id="GO:0005737">
    <property type="term" value="C:cytoplasm"/>
    <property type="evidence" value="ECO:0007669"/>
    <property type="project" value="UniProtKB-SubCell"/>
</dbReference>
<dbReference type="GO" id="GO:0004358">
    <property type="term" value="F:glutamate N-acetyltransferase activity"/>
    <property type="evidence" value="ECO:0007669"/>
    <property type="project" value="UniProtKB-UniRule"/>
</dbReference>
<dbReference type="GO" id="GO:0004042">
    <property type="term" value="F:L-glutamate N-acetyltransferase activity"/>
    <property type="evidence" value="ECO:0000318"/>
    <property type="project" value="GO_Central"/>
</dbReference>
<dbReference type="GO" id="GO:0006526">
    <property type="term" value="P:L-arginine biosynthetic process"/>
    <property type="evidence" value="ECO:0007669"/>
    <property type="project" value="UniProtKB-UniRule"/>
</dbReference>
<dbReference type="GO" id="GO:0006592">
    <property type="term" value="P:ornithine biosynthetic process"/>
    <property type="evidence" value="ECO:0000318"/>
    <property type="project" value="GO_Central"/>
</dbReference>
<dbReference type="CDD" id="cd02152">
    <property type="entry name" value="OAT"/>
    <property type="match status" value="1"/>
</dbReference>
<dbReference type="FunFam" id="3.10.20.340:FF:000003">
    <property type="entry name" value="Arginine biosynthesis bifunctional protein ArgJ"/>
    <property type="match status" value="1"/>
</dbReference>
<dbReference type="FunFam" id="3.60.70.12:FF:000001">
    <property type="entry name" value="Arginine biosynthesis bifunctional protein ArgJ, chloroplastic"/>
    <property type="match status" value="1"/>
</dbReference>
<dbReference type="Gene3D" id="3.10.20.340">
    <property type="entry name" value="ArgJ beta chain, C-terminal domain"/>
    <property type="match status" value="1"/>
</dbReference>
<dbReference type="Gene3D" id="3.60.70.12">
    <property type="entry name" value="L-amino peptidase D-ALA esterase/amidase"/>
    <property type="match status" value="1"/>
</dbReference>
<dbReference type="HAMAP" id="MF_01106">
    <property type="entry name" value="ArgJ"/>
    <property type="match status" value="1"/>
</dbReference>
<dbReference type="InterPro" id="IPR002813">
    <property type="entry name" value="Arg_biosynth_ArgJ"/>
</dbReference>
<dbReference type="InterPro" id="IPR016117">
    <property type="entry name" value="ArgJ-like_dom_sf"/>
</dbReference>
<dbReference type="InterPro" id="IPR042195">
    <property type="entry name" value="ArgJ_beta_C"/>
</dbReference>
<dbReference type="NCBIfam" id="TIGR00120">
    <property type="entry name" value="ArgJ"/>
    <property type="match status" value="1"/>
</dbReference>
<dbReference type="NCBIfam" id="NF003802">
    <property type="entry name" value="PRK05388.1"/>
    <property type="match status" value="1"/>
</dbReference>
<dbReference type="PANTHER" id="PTHR23100">
    <property type="entry name" value="ARGININE BIOSYNTHESIS BIFUNCTIONAL PROTEIN ARGJ"/>
    <property type="match status" value="1"/>
</dbReference>
<dbReference type="PANTHER" id="PTHR23100:SF0">
    <property type="entry name" value="ARGININE BIOSYNTHESIS BIFUNCTIONAL PROTEIN ARGJ, MITOCHONDRIAL"/>
    <property type="match status" value="1"/>
</dbReference>
<dbReference type="Pfam" id="PF01960">
    <property type="entry name" value="ArgJ"/>
    <property type="match status" value="1"/>
</dbReference>
<dbReference type="SUPFAM" id="SSF56266">
    <property type="entry name" value="DmpA/ArgJ-like"/>
    <property type="match status" value="1"/>
</dbReference>
<comment type="function">
    <text evidence="1">Catalyzes two activities which are involved in the cyclic version of arginine biosynthesis: the synthesis of N-acetylglutamate from glutamate and acetyl-CoA as the acetyl donor, and of ornithine by transacetylation between N(2)-acetylornithine and glutamate.</text>
</comment>
<comment type="catalytic activity">
    <reaction evidence="1">
        <text>N(2)-acetyl-L-ornithine + L-glutamate = N-acetyl-L-glutamate + L-ornithine</text>
        <dbReference type="Rhea" id="RHEA:15349"/>
        <dbReference type="ChEBI" id="CHEBI:29985"/>
        <dbReference type="ChEBI" id="CHEBI:44337"/>
        <dbReference type="ChEBI" id="CHEBI:46911"/>
        <dbReference type="ChEBI" id="CHEBI:57805"/>
        <dbReference type="EC" id="2.3.1.35"/>
    </reaction>
</comment>
<comment type="catalytic activity">
    <reaction evidence="1">
        <text>L-glutamate + acetyl-CoA = N-acetyl-L-glutamate + CoA + H(+)</text>
        <dbReference type="Rhea" id="RHEA:24292"/>
        <dbReference type="ChEBI" id="CHEBI:15378"/>
        <dbReference type="ChEBI" id="CHEBI:29985"/>
        <dbReference type="ChEBI" id="CHEBI:44337"/>
        <dbReference type="ChEBI" id="CHEBI:57287"/>
        <dbReference type="ChEBI" id="CHEBI:57288"/>
        <dbReference type="EC" id="2.3.1.1"/>
    </reaction>
</comment>
<comment type="pathway">
    <text evidence="1">Amino-acid biosynthesis; L-arginine biosynthesis; L-ornithine and N-acetyl-L-glutamate from L-glutamate and N(2)-acetyl-L-ornithine (cyclic): step 1/1.</text>
</comment>
<comment type="pathway">
    <text evidence="1">Amino-acid biosynthesis; L-arginine biosynthesis; N(2)-acetyl-L-ornithine from L-glutamate: step 1/4.</text>
</comment>
<comment type="subunit">
    <text evidence="1">Heterotetramer of two alpha and two beta chains.</text>
</comment>
<comment type="subcellular location">
    <subcellularLocation>
        <location evidence="1">Cytoplasm</location>
    </subcellularLocation>
</comment>
<comment type="similarity">
    <text evidence="1">Belongs to the ArgJ family.</text>
</comment>
<proteinExistence type="inferred from homology"/>
<organism>
    <name type="scientific">Bradyrhizobium diazoefficiens (strain JCM 10833 / BCRC 13528 / IAM 13628 / NBRC 14792 / USDA 110)</name>
    <dbReference type="NCBI Taxonomy" id="224911"/>
    <lineage>
        <taxon>Bacteria</taxon>
        <taxon>Pseudomonadati</taxon>
        <taxon>Pseudomonadota</taxon>
        <taxon>Alphaproteobacteria</taxon>
        <taxon>Hyphomicrobiales</taxon>
        <taxon>Nitrobacteraceae</taxon>
        <taxon>Bradyrhizobium</taxon>
    </lineage>
</organism>
<sequence>MSSSVSPLAPKTVPDMPVIAGVRLATAEAGIRYKNRTDVLLAVMDKGTAVAGVFTKSKCPSAPVEWCRAKLKGGKARALVVNSGNANAFTGKTGRSSTALTAKIAAKAVGCSESEIFLASTGVIGEPLDATKFDGVLGRLAETAEPGDYLAAAKAIMTTDTFPKVATATVKLGKAKVTINGMAKGAGMIAPDMATMLSFVFTDAPIAPAALQALLKSGVEDTFNAVTIDGDTSTSDTLLAFATGAAAEHGAPKISRASDPRLKAFVKAFNQVLANLAEQVARDGEGARKLVEITVEGAKTKASARKIAMSIANSPLVKTAIAGEDANWGRVVMAVGKAGEPADRDKLSISFNGIRVARSGARDPDYDEAQVSEAMKAPEIAIKVSLGLGKGRDRVMTCDLTKEYVAINGDYRS</sequence>
<keyword id="KW-0012">Acyltransferase</keyword>
<keyword id="KW-0028">Amino-acid biosynthesis</keyword>
<keyword id="KW-0055">Arginine biosynthesis</keyword>
<keyword id="KW-0068">Autocatalytic cleavage</keyword>
<keyword id="KW-0963">Cytoplasm</keyword>
<keyword id="KW-0511">Multifunctional enzyme</keyword>
<keyword id="KW-1185">Reference proteome</keyword>
<keyword id="KW-0808">Transferase</keyword>
<reference key="1">
    <citation type="journal article" date="2002" name="DNA Res.">
        <title>Complete genomic sequence of nitrogen-fixing symbiotic bacterium Bradyrhizobium japonicum USDA110.</title>
        <authorList>
            <person name="Kaneko T."/>
            <person name="Nakamura Y."/>
            <person name="Sato S."/>
            <person name="Minamisawa K."/>
            <person name="Uchiumi T."/>
            <person name="Sasamoto S."/>
            <person name="Watanabe A."/>
            <person name="Idesawa K."/>
            <person name="Iriguchi M."/>
            <person name="Kawashima K."/>
            <person name="Kohara M."/>
            <person name="Matsumoto M."/>
            <person name="Shimpo S."/>
            <person name="Tsuruoka H."/>
            <person name="Wada T."/>
            <person name="Yamada M."/>
            <person name="Tabata S."/>
        </authorList>
    </citation>
    <scope>NUCLEOTIDE SEQUENCE [LARGE SCALE GENOMIC DNA]</scope>
    <source>
        <strain>JCM 10833 / BCRC 13528 / IAM 13628 / NBRC 14792 / USDA 110</strain>
    </source>
</reference>
<name>ARGJ_BRADU</name>
<gene>
    <name evidence="1" type="primary">argJ</name>
    <name type="ordered locus">blr0206</name>
</gene>
<feature type="chain" id="PRO_0000002135" description="Arginine biosynthesis bifunctional protein ArgJ alpha chain" evidence="1">
    <location>
        <begin position="1"/>
        <end position="194"/>
    </location>
</feature>
<feature type="chain" id="PRO_0000002136" description="Arginine biosynthesis bifunctional protein ArgJ beta chain" evidence="1">
    <location>
        <begin position="195"/>
        <end position="413"/>
    </location>
</feature>
<feature type="active site" description="Nucleophile" evidence="1">
    <location>
        <position position="195"/>
    </location>
</feature>
<feature type="binding site" evidence="1">
    <location>
        <position position="158"/>
    </location>
    <ligand>
        <name>substrate</name>
    </ligand>
</feature>
<feature type="binding site" evidence="1">
    <location>
        <position position="184"/>
    </location>
    <ligand>
        <name>substrate</name>
    </ligand>
</feature>
<feature type="binding site" evidence="1">
    <location>
        <position position="195"/>
    </location>
    <ligand>
        <name>substrate</name>
    </ligand>
</feature>
<feature type="binding site" evidence="1">
    <location>
        <position position="285"/>
    </location>
    <ligand>
        <name>substrate</name>
    </ligand>
</feature>
<feature type="binding site" evidence="1">
    <location>
        <position position="408"/>
    </location>
    <ligand>
        <name>substrate</name>
    </ligand>
</feature>
<feature type="binding site" evidence="1">
    <location>
        <position position="413"/>
    </location>
    <ligand>
        <name>substrate</name>
    </ligand>
</feature>
<feature type="site" description="Involved in the stabilization of negative charge on the oxyanion by the formation of the oxyanion hole" evidence="1">
    <location>
        <position position="121"/>
    </location>
</feature>
<feature type="site" description="Involved in the stabilization of negative charge on the oxyanion by the formation of the oxyanion hole" evidence="1">
    <location>
        <position position="122"/>
    </location>
</feature>
<feature type="site" description="Cleavage; by autolysis" evidence="1">
    <location>
        <begin position="194"/>
        <end position="195"/>
    </location>
</feature>